<accession>B1L1S1</accession>
<evidence type="ECO:0000255" key="1">
    <source>
        <dbReference type="HAMAP-Rule" id="MF_00223"/>
    </source>
</evidence>
<comment type="catalytic activity">
    <reaction evidence="1">
        <text>GTP + H2O = 7,8-dihydroneopterin 3'-triphosphate + formate + H(+)</text>
        <dbReference type="Rhea" id="RHEA:17473"/>
        <dbReference type="ChEBI" id="CHEBI:15377"/>
        <dbReference type="ChEBI" id="CHEBI:15378"/>
        <dbReference type="ChEBI" id="CHEBI:15740"/>
        <dbReference type="ChEBI" id="CHEBI:37565"/>
        <dbReference type="ChEBI" id="CHEBI:58462"/>
        <dbReference type="EC" id="3.5.4.16"/>
    </reaction>
</comment>
<comment type="pathway">
    <text evidence="1">Cofactor biosynthesis; 7,8-dihydroneopterin triphosphate biosynthesis; 7,8-dihydroneopterin triphosphate from GTP: step 1/1.</text>
</comment>
<comment type="subunit">
    <text evidence="1">Homomer.</text>
</comment>
<comment type="similarity">
    <text evidence="1">Belongs to the GTP cyclohydrolase I family.</text>
</comment>
<keyword id="KW-0342">GTP-binding</keyword>
<keyword id="KW-0378">Hydrolase</keyword>
<keyword id="KW-0479">Metal-binding</keyword>
<keyword id="KW-0547">Nucleotide-binding</keyword>
<keyword id="KW-0554">One-carbon metabolism</keyword>
<keyword id="KW-0862">Zinc</keyword>
<dbReference type="EC" id="3.5.4.16" evidence="1"/>
<dbReference type="EMBL" id="CP000962">
    <property type="protein sequence ID" value="ACA55144.1"/>
    <property type="molecule type" value="Genomic_DNA"/>
</dbReference>
<dbReference type="RefSeq" id="WP_012343166.1">
    <property type="nucleotide sequence ID" value="NC_010520.1"/>
</dbReference>
<dbReference type="SMR" id="B1L1S1"/>
<dbReference type="KEGG" id="cbl:CLK_1035"/>
<dbReference type="HOGENOM" id="CLU_049768_3_2_9"/>
<dbReference type="UniPathway" id="UPA00848">
    <property type="reaction ID" value="UER00151"/>
</dbReference>
<dbReference type="GO" id="GO:0005737">
    <property type="term" value="C:cytoplasm"/>
    <property type="evidence" value="ECO:0007669"/>
    <property type="project" value="TreeGrafter"/>
</dbReference>
<dbReference type="GO" id="GO:0005525">
    <property type="term" value="F:GTP binding"/>
    <property type="evidence" value="ECO:0007669"/>
    <property type="project" value="UniProtKB-KW"/>
</dbReference>
<dbReference type="GO" id="GO:0003934">
    <property type="term" value="F:GTP cyclohydrolase I activity"/>
    <property type="evidence" value="ECO:0007669"/>
    <property type="project" value="UniProtKB-UniRule"/>
</dbReference>
<dbReference type="GO" id="GO:0008270">
    <property type="term" value="F:zinc ion binding"/>
    <property type="evidence" value="ECO:0007669"/>
    <property type="project" value="UniProtKB-UniRule"/>
</dbReference>
<dbReference type="GO" id="GO:0006730">
    <property type="term" value="P:one-carbon metabolic process"/>
    <property type="evidence" value="ECO:0007669"/>
    <property type="project" value="UniProtKB-UniRule"/>
</dbReference>
<dbReference type="GO" id="GO:0006729">
    <property type="term" value="P:tetrahydrobiopterin biosynthetic process"/>
    <property type="evidence" value="ECO:0007669"/>
    <property type="project" value="TreeGrafter"/>
</dbReference>
<dbReference type="GO" id="GO:0046654">
    <property type="term" value="P:tetrahydrofolate biosynthetic process"/>
    <property type="evidence" value="ECO:0007669"/>
    <property type="project" value="UniProtKB-UniRule"/>
</dbReference>
<dbReference type="FunFam" id="1.10.286.10:FF:000007">
    <property type="entry name" value="GTP cyclohydrolase 1"/>
    <property type="match status" value="1"/>
</dbReference>
<dbReference type="FunFam" id="3.30.1130.10:FF:000001">
    <property type="entry name" value="GTP cyclohydrolase 1"/>
    <property type="match status" value="1"/>
</dbReference>
<dbReference type="Gene3D" id="1.10.286.10">
    <property type="match status" value="1"/>
</dbReference>
<dbReference type="Gene3D" id="3.30.1130.10">
    <property type="match status" value="1"/>
</dbReference>
<dbReference type="HAMAP" id="MF_00223">
    <property type="entry name" value="FolE"/>
    <property type="match status" value="1"/>
</dbReference>
<dbReference type="InterPro" id="IPR043133">
    <property type="entry name" value="GTP-CH-I_C/QueF"/>
</dbReference>
<dbReference type="InterPro" id="IPR043134">
    <property type="entry name" value="GTP-CH-I_N"/>
</dbReference>
<dbReference type="InterPro" id="IPR001474">
    <property type="entry name" value="GTP_CycHdrlase_I"/>
</dbReference>
<dbReference type="InterPro" id="IPR018234">
    <property type="entry name" value="GTP_CycHdrlase_I_CS"/>
</dbReference>
<dbReference type="InterPro" id="IPR020602">
    <property type="entry name" value="GTP_CycHdrlase_I_dom"/>
</dbReference>
<dbReference type="NCBIfam" id="TIGR00063">
    <property type="entry name" value="folE"/>
    <property type="match status" value="1"/>
</dbReference>
<dbReference type="NCBIfam" id="NF006825">
    <property type="entry name" value="PRK09347.1-2"/>
    <property type="match status" value="1"/>
</dbReference>
<dbReference type="NCBIfam" id="NF006826">
    <property type="entry name" value="PRK09347.1-3"/>
    <property type="match status" value="1"/>
</dbReference>
<dbReference type="PANTHER" id="PTHR11109:SF7">
    <property type="entry name" value="GTP CYCLOHYDROLASE 1"/>
    <property type="match status" value="1"/>
</dbReference>
<dbReference type="PANTHER" id="PTHR11109">
    <property type="entry name" value="GTP CYCLOHYDROLASE I"/>
    <property type="match status" value="1"/>
</dbReference>
<dbReference type="Pfam" id="PF01227">
    <property type="entry name" value="GTP_cyclohydroI"/>
    <property type="match status" value="1"/>
</dbReference>
<dbReference type="SUPFAM" id="SSF55620">
    <property type="entry name" value="Tetrahydrobiopterin biosynthesis enzymes-like"/>
    <property type="match status" value="1"/>
</dbReference>
<dbReference type="PROSITE" id="PS00859">
    <property type="entry name" value="GTP_CYCLOHYDROL_1_1"/>
    <property type="match status" value="1"/>
</dbReference>
<feature type="chain" id="PRO_1000100168" description="GTP cyclohydrolase 1">
    <location>
        <begin position="1"/>
        <end position="196"/>
    </location>
</feature>
<feature type="binding site" evidence="1">
    <location>
        <position position="86"/>
    </location>
    <ligand>
        <name>Zn(2+)</name>
        <dbReference type="ChEBI" id="CHEBI:29105"/>
    </ligand>
</feature>
<feature type="binding site" evidence="1">
    <location>
        <position position="89"/>
    </location>
    <ligand>
        <name>Zn(2+)</name>
        <dbReference type="ChEBI" id="CHEBI:29105"/>
    </ligand>
</feature>
<feature type="binding site" evidence="1">
    <location>
        <position position="158"/>
    </location>
    <ligand>
        <name>Zn(2+)</name>
        <dbReference type="ChEBI" id="CHEBI:29105"/>
    </ligand>
</feature>
<proteinExistence type="inferred from homology"/>
<sequence length="196" mass="22178">MAIDVKAIEEHIRGILIALGDNPEREGLKDTPKRVAKMYEEVFKGMCYSNDEIAEMFNITFEDDLCINDNENDMVFMKEIEIFSHCEHHLALMYNMKVAIAYIPKGKIIGLSKMARIADMVGRRLQLQERIGSDIAEILQKITGSEDVAVIIEGEHGCMTTRGIKKSGTKTITTTLRGKFNTDPIISNKLMMLYTK</sequence>
<organism>
    <name type="scientific">Clostridium botulinum (strain Loch Maree / Type A3)</name>
    <dbReference type="NCBI Taxonomy" id="498214"/>
    <lineage>
        <taxon>Bacteria</taxon>
        <taxon>Bacillati</taxon>
        <taxon>Bacillota</taxon>
        <taxon>Clostridia</taxon>
        <taxon>Eubacteriales</taxon>
        <taxon>Clostridiaceae</taxon>
        <taxon>Clostridium</taxon>
    </lineage>
</organism>
<reference key="1">
    <citation type="journal article" date="2007" name="PLoS ONE">
        <title>Analysis of the neurotoxin complex genes in Clostridium botulinum A1-A4 and B1 strains: BoNT/A3, /Ba4 and /B1 clusters are located within plasmids.</title>
        <authorList>
            <person name="Smith T.J."/>
            <person name="Hill K.K."/>
            <person name="Foley B.T."/>
            <person name="Detter J.C."/>
            <person name="Munk A.C."/>
            <person name="Bruce D.C."/>
            <person name="Doggett N.A."/>
            <person name="Smith L.A."/>
            <person name="Marks J.D."/>
            <person name="Xie G."/>
            <person name="Brettin T.S."/>
        </authorList>
    </citation>
    <scope>NUCLEOTIDE SEQUENCE [LARGE SCALE GENOMIC DNA]</scope>
    <source>
        <strain>Loch Maree / Type A3</strain>
    </source>
</reference>
<gene>
    <name evidence="1" type="primary">folE</name>
    <name type="ordered locus">CLK_1035</name>
</gene>
<name>GCH1_CLOBM</name>
<protein>
    <recommendedName>
        <fullName evidence="1">GTP cyclohydrolase 1</fullName>
        <ecNumber evidence="1">3.5.4.16</ecNumber>
    </recommendedName>
    <alternativeName>
        <fullName evidence="1">GTP cyclohydrolase I</fullName>
        <shortName evidence="1">GTP-CH-I</shortName>
    </alternativeName>
</protein>